<keyword id="KW-0053">Apoptosis</keyword>
<keyword id="KW-0966">Cell projection</keyword>
<keyword id="KW-1015">Disulfide bond</keyword>
<keyword id="KW-0249">Electron transport</keyword>
<keyword id="KW-0256">Endoplasmic reticulum</keyword>
<keyword id="KW-0274">FAD</keyword>
<keyword id="KW-0285">Flavoprotein</keyword>
<keyword id="KW-0325">Glycoprotein</keyword>
<keyword id="KW-0333">Golgi apparatus</keyword>
<keyword id="KW-0472">Membrane</keyword>
<keyword id="KW-0560">Oxidoreductase</keyword>
<keyword id="KW-0597">Phosphoprotein</keyword>
<keyword id="KW-0676">Redox-active center</keyword>
<keyword id="KW-1185">Reference proteome</keyword>
<keyword id="KW-0964">Secreted</keyword>
<keyword id="KW-0732">Signal</keyword>
<keyword id="KW-0813">Transport</keyword>
<proteinExistence type="evidence at protein level"/>
<protein>
    <recommendedName>
        <fullName>ERO1-like protein alpha</fullName>
        <shortName>ERO1-L</shortName>
        <shortName>ERO1-L-alpha</shortName>
        <ecNumber evidence="3">1.8.4.-</ecNumber>
    </recommendedName>
    <alternativeName>
        <fullName evidence="3">Endoplasmic reticulum oxidoreductase alpha</fullName>
    </alternativeName>
    <alternativeName>
        <fullName>Endoplasmic reticulum oxidoreductin-1-like protein</fullName>
    </alternativeName>
    <alternativeName>
        <fullName>Oxidoreductin-1-L-alpha</fullName>
    </alternativeName>
</protein>
<dbReference type="EC" id="1.8.4.-" evidence="3"/>
<dbReference type="EMBL" id="AF144695">
    <property type="protein sequence ID" value="AAF20364.1"/>
    <property type="molecule type" value="mRNA"/>
</dbReference>
<dbReference type="EMBL" id="BC025102">
    <property type="protein sequence ID" value="AAH25102.1"/>
    <property type="molecule type" value="mRNA"/>
</dbReference>
<dbReference type="EMBL" id="AK009667">
    <property type="protein sequence ID" value="BAB26428.1"/>
    <property type="molecule type" value="mRNA"/>
</dbReference>
<dbReference type="CCDS" id="CCDS36893.1"/>
<dbReference type="RefSeq" id="NP_056589.1">
    <property type="nucleotide sequence ID" value="NM_015774.3"/>
</dbReference>
<dbReference type="SMR" id="Q8R180"/>
<dbReference type="BioGRID" id="206053">
    <property type="interactions" value="18"/>
</dbReference>
<dbReference type="FunCoup" id="Q8R180">
    <property type="interactions" value="2171"/>
</dbReference>
<dbReference type="IntAct" id="Q8R180">
    <property type="interactions" value="1"/>
</dbReference>
<dbReference type="MINT" id="Q8R180"/>
<dbReference type="STRING" id="10090.ENSMUSP00000022378"/>
<dbReference type="BindingDB" id="Q8R180"/>
<dbReference type="ChEMBL" id="CHEMBL4105849"/>
<dbReference type="GlyConnect" id="2304">
    <property type="glycosylation" value="3 N-Linked glycans (1 site)"/>
</dbReference>
<dbReference type="GlyCosmos" id="Q8R180">
    <property type="glycosylation" value="2 sites, 3 glycans"/>
</dbReference>
<dbReference type="GlyGen" id="Q8R180">
    <property type="glycosylation" value="2 sites, 4 N-linked glycans (2 sites)"/>
</dbReference>
<dbReference type="iPTMnet" id="Q8R180"/>
<dbReference type="PhosphoSitePlus" id="Q8R180"/>
<dbReference type="SwissPalm" id="Q8R180"/>
<dbReference type="jPOST" id="Q8R180"/>
<dbReference type="PaxDb" id="10090-ENSMUSP00000022378"/>
<dbReference type="ProteomicsDB" id="275888"/>
<dbReference type="Pumba" id="Q8R180"/>
<dbReference type="Antibodypedia" id="10791">
    <property type="antibodies" value="331 antibodies from 32 providers"/>
</dbReference>
<dbReference type="DNASU" id="50527"/>
<dbReference type="Ensembl" id="ENSMUST00000022378.9">
    <property type="protein sequence ID" value="ENSMUSP00000022378.8"/>
    <property type="gene ID" value="ENSMUSG00000021831.10"/>
</dbReference>
<dbReference type="GeneID" id="50527"/>
<dbReference type="KEGG" id="mmu:50527"/>
<dbReference type="UCSC" id="uc007tgm.2">
    <property type="organism name" value="mouse"/>
</dbReference>
<dbReference type="AGR" id="MGI:1354385"/>
<dbReference type="CTD" id="30001"/>
<dbReference type="MGI" id="MGI:1354385">
    <property type="gene designation" value="Ero1a"/>
</dbReference>
<dbReference type="VEuPathDB" id="HostDB:ENSMUSG00000021831"/>
<dbReference type="eggNOG" id="KOG2608">
    <property type="taxonomic scope" value="Eukaryota"/>
</dbReference>
<dbReference type="GeneTree" id="ENSGT00390000007753"/>
<dbReference type="HOGENOM" id="CLU_023061_2_2_1"/>
<dbReference type="InParanoid" id="Q8R180"/>
<dbReference type="OMA" id="PCGIRSE"/>
<dbReference type="OrthoDB" id="269384at2759"/>
<dbReference type="PhylomeDB" id="Q8R180"/>
<dbReference type="TreeFam" id="TF314471"/>
<dbReference type="Reactome" id="R-MMU-3299685">
    <property type="pathway name" value="Detoxification of Reactive Oxygen Species"/>
</dbReference>
<dbReference type="BioGRID-ORCS" id="50527">
    <property type="hits" value="4 hits in 80 CRISPR screens"/>
</dbReference>
<dbReference type="ChiTaRS" id="Ero1l">
    <property type="organism name" value="mouse"/>
</dbReference>
<dbReference type="PRO" id="PR:Q8R180"/>
<dbReference type="Proteomes" id="UP000000589">
    <property type="component" value="Chromosome 14"/>
</dbReference>
<dbReference type="RNAct" id="Q8R180">
    <property type="molecule type" value="protein"/>
</dbReference>
<dbReference type="Bgee" id="ENSMUSG00000021831">
    <property type="expression patterns" value="Expressed in ectoplacental cone and 263 other cell types or tissues"/>
</dbReference>
<dbReference type="ExpressionAtlas" id="Q8R180">
    <property type="expression patterns" value="baseline and differential"/>
</dbReference>
<dbReference type="GO" id="GO:0030425">
    <property type="term" value="C:dendrite"/>
    <property type="evidence" value="ECO:0007669"/>
    <property type="project" value="UniProtKB-SubCell"/>
</dbReference>
<dbReference type="GO" id="GO:0005783">
    <property type="term" value="C:endoplasmic reticulum"/>
    <property type="evidence" value="ECO:0000315"/>
    <property type="project" value="MGI"/>
</dbReference>
<dbReference type="GO" id="GO:0005789">
    <property type="term" value="C:endoplasmic reticulum membrane"/>
    <property type="evidence" value="ECO:0000266"/>
    <property type="project" value="MGI"/>
</dbReference>
<dbReference type="GO" id="GO:0005615">
    <property type="term" value="C:extracellular space"/>
    <property type="evidence" value="ECO:0000250"/>
    <property type="project" value="UniProtKB"/>
</dbReference>
<dbReference type="GO" id="GO:0005796">
    <property type="term" value="C:Golgi lumen"/>
    <property type="evidence" value="ECO:0000250"/>
    <property type="project" value="UniProtKB"/>
</dbReference>
<dbReference type="GO" id="GO:0071949">
    <property type="term" value="F:FAD binding"/>
    <property type="evidence" value="ECO:0007669"/>
    <property type="project" value="InterPro"/>
</dbReference>
<dbReference type="GO" id="GO:0016491">
    <property type="term" value="F:oxidoreductase activity"/>
    <property type="evidence" value="ECO:0000314"/>
    <property type="project" value="MGI"/>
</dbReference>
<dbReference type="GO" id="GO:0015035">
    <property type="term" value="F:protein-disulfide reductase activity"/>
    <property type="evidence" value="ECO:0000314"/>
    <property type="project" value="MGI"/>
</dbReference>
<dbReference type="GO" id="GO:0016972">
    <property type="term" value="F:thiol oxidase activity"/>
    <property type="evidence" value="ECO:0007669"/>
    <property type="project" value="InterPro"/>
</dbReference>
<dbReference type="GO" id="GO:0050873">
    <property type="term" value="P:brown fat cell differentiation"/>
    <property type="evidence" value="ECO:0000314"/>
    <property type="project" value="MGI"/>
</dbReference>
<dbReference type="GO" id="GO:0045454">
    <property type="term" value="P:cell redox homeostasis"/>
    <property type="evidence" value="ECO:0000316"/>
    <property type="project" value="MGI"/>
</dbReference>
<dbReference type="GO" id="GO:0071456">
    <property type="term" value="P:cellular response to hypoxia"/>
    <property type="evidence" value="ECO:0007669"/>
    <property type="project" value="Ensembl"/>
</dbReference>
<dbReference type="GO" id="GO:0051085">
    <property type="term" value="P:chaperone cofactor-dependent protein refolding"/>
    <property type="evidence" value="ECO:0007669"/>
    <property type="project" value="Ensembl"/>
</dbReference>
<dbReference type="GO" id="GO:0030199">
    <property type="term" value="P:collagen fibril organization"/>
    <property type="evidence" value="ECO:0000315"/>
    <property type="project" value="MGI"/>
</dbReference>
<dbReference type="GO" id="GO:0030968">
    <property type="term" value="P:endoplasmic reticulum unfolded protein response"/>
    <property type="evidence" value="ECO:0000314"/>
    <property type="project" value="MGI"/>
</dbReference>
<dbReference type="GO" id="GO:0030198">
    <property type="term" value="P:extracellular matrix organization"/>
    <property type="evidence" value="ECO:0000316"/>
    <property type="project" value="MGI"/>
</dbReference>
<dbReference type="GO" id="GO:0070059">
    <property type="term" value="P:intrinsic apoptotic signaling pathway in response to endoplasmic reticulum stress"/>
    <property type="evidence" value="ECO:0000315"/>
    <property type="project" value="UniProtKB"/>
</dbReference>
<dbReference type="GO" id="GO:0019852">
    <property type="term" value="P:L-ascorbic acid metabolic process"/>
    <property type="evidence" value="ECO:0000315"/>
    <property type="project" value="MGI"/>
</dbReference>
<dbReference type="GO" id="GO:0006457">
    <property type="term" value="P:protein folding"/>
    <property type="evidence" value="ECO:0000314"/>
    <property type="project" value="MGI"/>
</dbReference>
<dbReference type="GO" id="GO:0034975">
    <property type="term" value="P:protein folding in endoplasmic reticulum"/>
    <property type="evidence" value="ECO:0007669"/>
    <property type="project" value="InterPro"/>
</dbReference>
<dbReference type="GO" id="GO:0051604">
    <property type="term" value="P:protein maturation"/>
    <property type="evidence" value="ECO:0000316"/>
    <property type="project" value="MGI"/>
</dbReference>
<dbReference type="GO" id="GO:0051209">
    <property type="term" value="P:release of sequestered calcium ion into cytosol"/>
    <property type="evidence" value="ECO:0000315"/>
    <property type="project" value="UniProtKB"/>
</dbReference>
<dbReference type="GO" id="GO:0034976">
    <property type="term" value="P:response to endoplasmic reticulum stress"/>
    <property type="evidence" value="ECO:0000314"/>
    <property type="project" value="UniProtKB"/>
</dbReference>
<dbReference type="GO" id="GO:0006979">
    <property type="term" value="P:response to oxidative stress"/>
    <property type="evidence" value="ECO:0000314"/>
    <property type="project" value="MGI"/>
</dbReference>
<dbReference type="GO" id="GO:0007519">
    <property type="term" value="P:skeletal muscle tissue development"/>
    <property type="evidence" value="ECO:0000315"/>
    <property type="project" value="MGI"/>
</dbReference>
<dbReference type="GO" id="GO:0007179">
    <property type="term" value="P:transforming growth factor beta receptor signaling pathway"/>
    <property type="evidence" value="ECO:0000315"/>
    <property type="project" value="MGI"/>
</dbReference>
<dbReference type="InterPro" id="IPR007266">
    <property type="entry name" value="Ero1"/>
</dbReference>
<dbReference type="InterPro" id="IPR037192">
    <property type="entry name" value="ERO1-like_sf"/>
</dbReference>
<dbReference type="PANTHER" id="PTHR12613:SF1">
    <property type="entry name" value="ERO1-LIKE PROTEIN ALPHA"/>
    <property type="match status" value="1"/>
</dbReference>
<dbReference type="PANTHER" id="PTHR12613">
    <property type="entry name" value="ERO1-RELATED"/>
    <property type="match status" value="1"/>
</dbReference>
<dbReference type="Pfam" id="PF04137">
    <property type="entry name" value="ERO1"/>
    <property type="match status" value="1"/>
</dbReference>
<dbReference type="PIRSF" id="PIRSF017205">
    <property type="entry name" value="ERO1"/>
    <property type="match status" value="1"/>
</dbReference>
<dbReference type="SUPFAM" id="SSF110019">
    <property type="entry name" value="ERO1-like"/>
    <property type="match status" value="1"/>
</dbReference>
<name>ERO1A_MOUSE</name>
<comment type="function">
    <text evidence="3 6 7">Oxidoreductase involved in disulfide bond formation in the endoplasmic reticulum. Efficiently reoxidizes P4HB/PDI, the enzyme catalyzing protein disulfide formation, in order to allow P4HB to sustain additional rounds of disulfide formation. Following P4HB reoxidation, passes its electrons to molecular oxygen via FAD, leading to the production of reactive oxygen species (ROS) in the cell. Required for the proper folding of immunoglobulins (By similarity). Plays an important role in ER stress-induced, CHOP-dependent apoptosis by activating the inositol 1,4,5-trisphosphate receptor IP3R1.</text>
</comment>
<comment type="cofactor">
    <cofactor evidence="3">
        <name>FAD</name>
        <dbReference type="ChEBI" id="CHEBI:57692"/>
    </cofactor>
</comment>
<comment type="activity regulation">
    <text evidence="1">Enzyme activity is tightly regulated to prevent the accumulation of reactive oxygen species in the endoplasmic reticulum. Reversibly down-regulated by the formation of disulfide bonds between the active site Cys-94 and Cys-130, and between Cys-99 and Cys-104. Glutathione may be required to regulate its activity in the endoplasmic reticulum (By similarity).</text>
</comment>
<comment type="subunit">
    <text evidence="3">Predominantly monomer. May function both as a monomer and a homodimer. Interacts with PDILT. Interacts with ERP44; the interaction results in retention of ERO1A in the endoplasmic reticulum.</text>
</comment>
<comment type="subcellular location">
    <subcellularLocation>
        <location evidence="3">Endoplasmic reticulum membrane</location>
        <topology evidence="3">Peripheral membrane protein</topology>
        <orientation evidence="3">Lumenal side</orientation>
    </subcellularLocation>
    <subcellularLocation>
        <location evidence="3">Golgi apparatus lumen</location>
    </subcellularLocation>
    <subcellularLocation>
        <location evidence="3">Secreted</location>
    </subcellularLocation>
    <subcellularLocation>
        <location evidence="2">Cell projection</location>
        <location evidence="2">Dendrite</location>
    </subcellularLocation>
    <text evidence="2 3">The association with ERP44 is essential for its retention in the endoplasmic reticulum (By similarity). In neurons, it localizes to dendrites (By similarity).</text>
</comment>
<comment type="tissue specificity">
    <text evidence="7 8">Widely expressed (at protein level) (PubMed:20308425). In the mammary gland, expressed at higher levels in lactating mice than in virgin mice (at protein level) (PubMed:29858230).</text>
</comment>
<comment type="induction">
    <text evidence="5 6">Stimulated by hypoxia; suggesting that it is regulated via the HIF-pathway. By ER stress in a DDIT3/CHOP-dependent manner.</text>
</comment>
<comment type="PTM">
    <text evidence="1">N-glycosylated.</text>
</comment>
<comment type="PTM">
    <text evidence="1">The Cys-94/Cys-99 and Cys-390/Cys-393 disulfide bonds constitute the redox-active center. The Cys-94/Cys-99 disulfide bond may accept electron from P4HB and funnel them to the active site disulfide Cys-390/Cys-393. The regulatory Cys-99/Cys-104 disulfide bond stabilizes the other regulatory bond Cys-94/Cys-130 (By similarity).</text>
</comment>
<comment type="PTM">
    <text evidence="3 8">Phosphorylated on Ser-144 by FAM20C in the Golgi which increases its enzymatic activity (By similarity). Phosphorylation is induced by lactation (PubMed:29858230). It is also induced by hypoxia and reductive stress (By similarity).</text>
</comment>
<comment type="similarity">
    <text evidence="9">Belongs to the EROs family.</text>
</comment>
<organism>
    <name type="scientific">Mus musculus</name>
    <name type="common">Mouse</name>
    <dbReference type="NCBI Taxonomy" id="10090"/>
    <lineage>
        <taxon>Eukaryota</taxon>
        <taxon>Metazoa</taxon>
        <taxon>Chordata</taxon>
        <taxon>Craniata</taxon>
        <taxon>Vertebrata</taxon>
        <taxon>Euteleostomi</taxon>
        <taxon>Mammalia</taxon>
        <taxon>Eutheria</taxon>
        <taxon>Euarchontoglires</taxon>
        <taxon>Glires</taxon>
        <taxon>Rodentia</taxon>
        <taxon>Myomorpha</taxon>
        <taxon>Muroidea</taxon>
        <taxon>Muridae</taxon>
        <taxon>Murinae</taxon>
        <taxon>Mus</taxon>
        <taxon>Mus</taxon>
    </lineage>
</organism>
<sequence>MGRAWGLLVGLLGVVWLLRLGHGEERRPETAAQRCFCQVSGYLDDCTCDVETIDKFNNYRLFPRLQKLLESDYFRYYKVNLKKPCPFWNDINQCGRRDCAVKPCHSDEVPDGIKSASYKYSEEANRIEECEQAERLGAVDESLSEETQKAVLQWTKHDDSSDSFCEIDDIQSPDAEYVDLLLNPERYTGYKGPDAWRIWSVIYEENCFKPQTIQRPLASGRGKSKENTFYNWLEGLCVEKRAFYRLISGLHASINVHLSARYLLQDTWLEKKWGHNVTEFQQRFDGILTEGEGPRRLRNLYFLYLIELRALSKVLPFFERPDFQLFTGNKVQDAENKALLLEILHEIKSFPLHFDENSFFAGDKNEAHKLKEDFRLHFRNISRIMDCVGCFKCRLWGKLQTQGLGTALKILFSEKLIANMPESGPSYEFQLTRQEIVSLFNAFGRISTSVRELENFRHLLQNVH</sequence>
<accession>Q8R180</accession>
<accession>Q9CV47</accession>
<accession>Q9QY03</accession>
<feature type="signal peptide" evidence="4">
    <location>
        <begin position="1"/>
        <end position="23"/>
    </location>
</feature>
<feature type="chain" id="PRO_0000008416" description="ERO1-like protein alpha">
    <location>
        <begin position="24"/>
        <end position="464"/>
    </location>
</feature>
<feature type="binding site" evidence="3">
    <location>
        <position position="186"/>
    </location>
    <ligand>
        <name>FAD</name>
        <dbReference type="ChEBI" id="CHEBI:57692"/>
    </ligand>
</feature>
<feature type="binding site" evidence="3">
    <location>
        <position position="188"/>
    </location>
    <ligand>
        <name>FAD</name>
        <dbReference type="ChEBI" id="CHEBI:57692"/>
    </ligand>
</feature>
<feature type="binding site" evidence="3">
    <location>
        <position position="199"/>
    </location>
    <ligand>
        <name>FAD</name>
        <dbReference type="ChEBI" id="CHEBI:57692"/>
    </ligand>
</feature>
<feature type="binding site" evidence="3">
    <location>
        <position position="248"/>
    </location>
    <ligand>
        <name>FAD</name>
        <dbReference type="ChEBI" id="CHEBI:57692"/>
    </ligand>
</feature>
<feature type="binding site" evidence="3">
    <location>
        <position position="251"/>
    </location>
    <ligand>
        <name>FAD</name>
        <dbReference type="ChEBI" id="CHEBI:57692"/>
    </ligand>
</feature>
<feature type="binding site" evidence="3">
    <location>
        <position position="283"/>
    </location>
    <ligand>
        <name>FAD</name>
        <dbReference type="ChEBI" id="CHEBI:57692"/>
    </ligand>
</feature>
<feature type="binding site" evidence="3">
    <location>
        <position position="296"/>
    </location>
    <ligand>
        <name>FAD</name>
        <dbReference type="ChEBI" id="CHEBI:57692"/>
    </ligand>
</feature>
<feature type="modified residue" description="Phosphoserine" evidence="3">
    <location>
        <position position="106"/>
    </location>
</feature>
<feature type="modified residue" description="Phosphoserine" evidence="3">
    <location>
        <position position="142"/>
    </location>
</feature>
<feature type="modified residue" description="Phosphoserine" evidence="3">
    <location>
        <position position="144"/>
    </location>
</feature>
<feature type="glycosylation site" description="N-linked (GlcNAc...) asparagine" evidence="4">
    <location>
        <position position="276"/>
    </location>
</feature>
<feature type="glycosylation site" description="N-linked (GlcNAc...) asparagine" evidence="4">
    <location>
        <position position="380"/>
    </location>
</feature>
<feature type="disulfide bond" evidence="3">
    <location>
        <begin position="35"/>
        <end position="48"/>
    </location>
</feature>
<feature type="disulfide bond" evidence="3">
    <location>
        <begin position="37"/>
        <end position="46"/>
    </location>
</feature>
<feature type="disulfide bond" evidence="3">
    <location>
        <begin position="85"/>
        <end position="387"/>
    </location>
</feature>
<feature type="disulfide bond" description="Alternate" evidence="3">
    <location>
        <begin position="94"/>
        <end position="130"/>
    </location>
</feature>
<feature type="disulfide bond" description="Redox-active; alternate" evidence="3">
    <location>
        <begin position="94"/>
        <end position="99"/>
    </location>
</feature>
<feature type="disulfide bond" description="Alternate" evidence="3">
    <location>
        <begin position="99"/>
        <end position="104"/>
    </location>
</feature>
<feature type="disulfide bond" evidence="3">
    <location>
        <begin position="207"/>
        <end position="237"/>
    </location>
</feature>
<feature type="disulfide bond" description="Redox-active" evidence="3">
    <location>
        <begin position="390"/>
        <end position="393"/>
    </location>
</feature>
<feature type="sequence conflict" description="In Ref. 2; AAH25102." evidence="9" ref="2">
    <original>C</original>
    <variation>G</variation>
    <location>
        <position position="130"/>
    </location>
</feature>
<reference key="1">
    <citation type="journal article" date="2000" name="J. Biol. Chem.">
        <title>ERO1-L, a human protein that favors disulfide bond formation in the endoplasmic reticulum.</title>
        <authorList>
            <person name="Cabibbo A."/>
            <person name="Pagani M."/>
            <person name="Fabbri M."/>
            <person name="Rocchi M."/>
            <person name="Farmery M.R."/>
            <person name="Bulleid N.J."/>
            <person name="Sitia R."/>
        </authorList>
    </citation>
    <scope>NUCLEOTIDE SEQUENCE [MRNA]</scope>
</reference>
<reference key="2">
    <citation type="journal article" date="2004" name="Genome Res.">
        <title>The status, quality, and expansion of the NIH full-length cDNA project: the Mammalian Gene Collection (MGC).</title>
        <authorList>
            <consortium name="The MGC Project Team"/>
        </authorList>
    </citation>
    <scope>NUCLEOTIDE SEQUENCE [LARGE SCALE MRNA]</scope>
    <source>
        <tissue>Mammary tumor</tissue>
    </source>
</reference>
<reference key="3">
    <citation type="journal article" date="2005" name="Science">
        <title>The transcriptional landscape of the mammalian genome.</title>
        <authorList>
            <person name="Carninci P."/>
            <person name="Kasukawa T."/>
            <person name="Katayama S."/>
            <person name="Gough J."/>
            <person name="Frith M.C."/>
            <person name="Maeda N."/>
            <person name="Oyama R."/>
            <person name="Ravasi T."/>
            <person name="Lenhard B."/>
            <person name="Wells C."/>
            <person name="Kodzius R."/>
            <person name="Shimokawa K."/>
            <person name="Bajic V.B."/>
            <person name="Brenner S.E."/>
            <person name="Batalov S."/>
            <person name="Forrest A.R."/>
            <person name="Zavolan M."/>
            <person name="Davis M.J."/>
            <person name="Wilming L.G."/>
            <person name="Aidinis V."/>
            <person name="Allen J.E."/>
            <person name="Ambesi-Impiombato A."/>
            <person name="Apweiler R."/>
            <person name="Aturaliya R.N."/>
            <person name="Bailey T.L."/>
            <person name="Bansal M."/>
            <person name="Baxter L."/>
            <person name="Beisel K.W."/>
            <person name="Bersano T."/>
            <person name="Bono H."/>
            <person name="Chalk A.M."/>
            <person name="Chiu K.P."/>
            <person name="Choudhary V."/>
            <person name="Christoffels A."/>
            <person name="Clutterbuck D.R."/>
            <person name="Crowe M.L."/>
            <person name="Dalla E."/>
            <person name="Dalrymple B.P."/>
            <person name="de Bono B."/>
            <person name="Della Gatta G."/>
            <person name="di Bernardo D."/>
            <person name="Down T."/>
            <person name="Engstrom P."/>
            <person name="Fagiolini M."/>
            <person name="Faulkner G."/>
            <person name="Fletcher C.F."/>
            <person name="Fukushima T."/>
            <person name="Furuno M."/>
            <person name="Futaki S."/>
            <person name="Gariboldi M."/>
            <person name="Georgii-Hemming P."/>
            <person name="Gingeras T.R."/>
            <person name="Gojobori T."/>
            <person name="Green R.E."/>
            <person name="Gustincich S."/>
            <person name="Harbers M."/>
            <person name="Hayashi Y."/>
            <person name="Hensch T.K."/>
            <person name="Hirokawa N."/>
            <person name="Hill D."/>
            <person name="Huminiecki L."/>
            <person name="Iacono M."/>
            <person name="Ikeo K."/>
            <person name="Iwama A."/>
            <person name="Ishikawa T."/>
            <person name="Jakt M."/>
            <person name="Kanapin A."/>
            <person name="Katoh M."/>
            <person name="Kawasawa Y."/>
            <person name="Kelso J."/>
            <person name="Kitamura H."/>
            <person name="Kitano H."/>
            <person name="Kollias G."/>
            <person name="Krishnan S.P."/>
            <person name="Kruger A."/>
            <person name="Kummerfeld S.K."/>
            <person name="Kurochkin I.V."/>
            <person name="Lareau L.F."/>
            <person name="Lazarevic D."/>
            <person name="Lipovich L."/>
            <person name="Liu J."/>
            <person name="Liuni S."/>
            <person name="McWilliam S."/>
            <person name="Madan Babu M."/>
            <person name="Madera M."/>
            <person name="Marchionni L."/>
            <person name="Matsuda H."/>
            <person name="Matsuzawa S."/>
            <person name="Miki H."/>
            <person name="Mignone F."/>
            <person name="Miyake S."/>
            <person name="Morris K."/>
            <person name="Mottagui-Tabar S."/>
            <person name="Mulder N."/>
            <person name="Nakano N."/>
            <person name="Nakauchi H."/>
            <person name="Ng P."/>
            <person name="Nilsson R."/>
            <person name="Nishiguchi S."/>
            <person name="Nishikawa S."/>
            <person name="Nori F."/>
            <person name="Ohara O."/>
            <person name="Okazaki Y."/>
            <person name="Orlando V."/>
            <person name="Pang K.C."/>
            <person name="Pavan W.J."/>
            <person name="Pavesi G."/>
            <person name="Pesole G."/>
            <person name="Petrovsky N."/>
            <person name="Piazza S."/>
            <person name="Reed J."/>
            <person name="Reid J.F."/>
            <person name="Ring B.Z."/>
            <person name="Ringwald M."/>
            <person name="Rost B."/>
            <person name="Ruan Y."/>
            <person name="Salzberg S.L."/>
            <person name="Sandelin A."/>
            <person name="Schneider C."/>
            <person name="Schoenbach C."/>
            <person name="Sekiguchi K."/>
            <person name="Semple C.A."/>
            <person name="Seno S."/>
            <person name="Sessa L."/>
            <person name="Sheng Y."/>
            <person name="Shibata Y."/>
            <person name="Shimada H."/>
            <person name="Shimada K."/>
            <person name="Silva D."/>
            <person name="Sinclair B."/>
            <person name="Sperling S."/>
            <person name="Stupka E."/>
            <person name="Sugiura K."/>
            <person name="Sultana R."/>
            <person name="Takenaka Y."/>
            <person name="Taki K."/>
            <person name="Tammoja K."/>
            <person name="Tan S.L."/>
            <person name="Tang S."/>
            <person name="Taylor M.S."/>
            <person name="Tegner J."/>
            <person name="Teichmann S.A."/>
            <person name="Ueda H.R."/>
            <person name="van Nimwegen E."/>
            <person name="Verardo R."/>
            <person name="Wei C.L."/>
            <person name="Yagi K."/>
            <person name="Yamanishi H."/>
            <person name="Zabarovsky E."/>
            <person name="Zhu S."/>
            <person name="Zimmer A."/>
            <person name="Hide W."/>
            <person name="Bult C."/>
            <person name="Grimmond S.M."/>
            <person name="Teasdale R.D."/>
            <person name="Liu E.T."/>
            <person name="Brusic V."/>
            <person name="Quackenbush J."/>
            <person name="Wahlestedt C."/>
            <person name="Mattick J.S."/>
            <person name="Hume D.A."/>
            <person name="Kai C."/>
            <person name="Sasaki D."/>
            <person name="Tomaru Y."/>
            <person name="Fukuda S."/>
            <person name="Kanamori-Katayama M."/>
            <person name="Suzuki M."/>
            <person name="Aoki J."/>
            <person name="Arakawa T."/>
            <person name="Iida J."/>
            <person name="Imamura K."/>
            <person name="Itoh M."/>
            <person name="Kato T."/>
            <person name="Kawaji H."/>
            <person name="Kawagashira N."/>
            <person name="Kawashima T."/>
            <person name="Kojima M."/>
            <person name="Kondo S."/>
            <person name="Konno H."/>
            <person name="Nakano K."/>
            <person name="Ninomiya N."/>
            <person name="Nishio T."/>
            <person name="Okada M."/>
            <person name="Plessy C."/>
            <person name="Shibata K."/>
            <person name="Shiraki T."/>
            <person name="Suzuki S."/>
            <person name="Tagami M."/>
            <person name="Waki K."/>
            <person name="Watahiki A."/>
            <person name="Okamura-Oho Y."/>
            <person name="Suzuki H."/>
            <person name="Kawai J."/>
            <person name="Hayashizaki Y."/>
        </authorList>
    </citation>
    <scope>NUCLEOTIDE SEQUENCE [LARGE SCALE MRNA] OF 232-464</scope>
    <source>
        <strain>C57BL/6J</strain>
        <tissue>Tongue</tissue>
    </source>
</reference>
<reference key="4">
    <citation type="journal article" date="2003" name="Eur. J. Biochem.">
        <title>The cellular oxygen tension regulates expression of the endoplasmic oxidoreductase ERO1-Lalpha.</title>
        <authorList>
            <person name="Gess B."/>
            <person name="Hofbauer K.H."/>
            <person name="Wenger R.H."/>
            <person name="Lohaus C."/>
            <person name="Meyer H.E."/>
            <person name="Kurtz A."/>
        </authorList>
    </citation>
    <scope>INDUCTION</scope>
</reference>
<reference key="5">
    <citation type="journal article" date="2009" name="J. Cell Biol.">
        <title>Role of ERO1-alpha-mediated stimulation of inositol 1,4,5-triphosphate receptor activity in endoplasmic reticulum stress-induced apoptosis.</title>
        <authorList>
            <person name="Li G."/>
            <person name="Mongillo M."/>
            <person name="Chin K.T."/>
            <person name="Harding H."/>
            <person name="Ron D."/>
            <person name="Marks A.R."/>
            <person name="Tabas I."/>
        </authorList>
    </citation>
    <scope>FUNCTION</scope>
    <scope>INDUCTION</scope>
</reference>
<reference key="6">
    <citation type="journal article" date="2010" name="Cell">
        <title>A tissue-specific atlas of mouse protein phosphorylation and expression.</title>
        <authorList>
            <person name="Huttlin E.L."/>
            <person name="Jedrychowski M.P."/>
            <person name="Elias J.E."/>
            <person name="Goswami T."/>
            <person name="Rad R."/>
            <person name="Beausoleil S.A."/>
            <person name="Villen J."/>
            <person name="Haas W."/>
            <person name="Sowa M.E."/>
            <person name="Gygi S.P."/>
        </authorList>
    </citation>
    <scope>IDENTIFICATION BY MASS SPECTROMETRY [LARGE SCALE ANALYSIS]</scope>
    <source>
        <tissue>Brain</tissue>
        <tissue>Heart</tissue>
        <tissue>Kidney</tissue>
        <tissue>Liver</tissue>
        <tissue>Lung</tissue>
        <tissue>Pancreas</tissue>
        <tissue>Spleen</tissue>
        <tissue>Testis</tissue>
    </source>
</reference>
<reference key="7">
    <citation type="journal article" date="2010" name="J. Cell Biol.">
        <title>ERO1-beta, a pancreas-specific disulfide oxidase, promotes insulin biogenesis and glucose homeostasis.</title>
        <authorList>
            <person name="Zito E."/>
            <person name="Chin K.T."/>
            <person name="Blais J."/>
            <person name="Harding H.P."/>
            <person name="Ron D."/>
        </authorList>
    </citation>
    <scope>FUNCTION</scope>
    <scope>TISSUE SPECIFICITY</scope>
</reference>
<reference key="8">
    <citation type="journal article" date="2018" name="EMBO J.">
        <title>Secretory kinase Fam20C tunes endoplasmic reticulum redox state via phosphorylation of Ero1alpha.</title>
        <authorList>
            <person name="Zhang J."/>
            <person name="Zhu Q."/>
            <person name="Wang X."/>
            <person name="Yu J."/>
            <person name="Chen X."/>
            <person name="Wang J."/>
            <person name="Wang X."/>
            <person name="Xiao J."/>
            <person name="Wang C.C."/>
            <person name="Wang L."/>
        </authorList>
    </citation>
    <scope>TISSUE SPECIFICITY</scope>
    <scope>PHOSPHORYLATION</scope>
</reference>
<evidence type="ECO:0000250" key="1"/>
<evidence type="ECO:0000250" key="2">
    <source>
        <dbReference type="UniProtKB" id="Q8R4A1"/>
    </source>
</evidence>
<evidence type="ECO:0000250" key="3">
    <source>
        <dbReference type="UniProtKB" id="Q96HE7"/>
    </source>
</evidence>
<evidence type="ECO:0000255" key="4"/>
<evidence type="ECO:0000269" key="5">
    <source>
    </source>
</evidence>
<evidence type="ECO:0000269" key="6">
    <source>
    </source>
</evidence>
<evidence type="ECO:0000269" key="7">
    <source>
    </source>
</evidence>
<evidence type="ECO:0000269" key="8">
    <source>
    </source>
</evidence>
<evidence type="ECO:0000305" key="9"/>
<gene>
    <name evidence="3" type="primary">Ero1a</name>
    <name type="synonym">Ero1l</name>
</gene>